<sequence>MSELTHVRADGSAHMVDVTGKNETSRTAVAEGFVKMRGDVVKQLFSAGLPKGDALPVARIAGIMGAKKTPDIIPLCHPLPLGKITVDFFELTDGVRIEASVKTRGVTGVEMEALTAVSTAALTVYDMIKAVDKMAVIDGIRVLSKTGGKSGDWSVQ</sequence>
<organism>
    <name type="scientific">Corynebacterium glutamicum (strain ATCC 13032 / DSM 20300 / JCM 1318 / BCRC 11384 / CCUG 27702 / LMG 3730 / NBRC 12168 / NCIMB 10025 / NRRL B-2784 / 534)</name>
    <dbReference type="NCBI Taxonomy" id="196627"/>
    <lineage>
        <taxon>Bacteria</taxon>
        <taxon>Bacillati</taxon>
        <taxon>Actinomycetota</taxon>
        <taxon>Actinomycetes</taxon>
        <taxon>Mycobacteriales</taxon>
        <taxon>Corynebacteriaceae</taxon>
        <taxon>Corynebacterium</taxon>
    </lineage>
</organism>
<comment type="function">
    <text evidence="1">Catalyzes the conversion of (8S)-3',8-cyclo-7,8-dihydroguanosine 5'-triphosphate to cyclic pyranopterin monophosphate (cPMP).</text>
</comment>
<comment type="catalytic activity">
    <reaction evidence="1">
        <text>(8S)-3',8-cyclo-7,8-dihydroguanosine 5'-triphosphate = cyclic pyranopterin phosphate + diphosphate</text>
        <dbReference type="Rhea" id="RHEA:49580"/>
        <dbReference type="ChEBI" id="CHEBI:33019"/>
        <dbReference type="ChEBI" id="CHEBI:59648"/>
        <dbReference type="ChEBI" id="CHEBI:131766"/>
        <dbReference type="EC" id="4.6.1.17"/>
    </reaction>
</comment>
<comment type="pathway">
    <text evidence="1">Cofactor biosynthesis; molybdopterin biosynthesis.</text>
</comment>
<comment type="subunit">
    <text evidence="1">Homohexamer; trimer of dimers.</text>
</comment>
<comment type="similarity">
    <text evidence="1">Belongs to the MoaC family.</text>
</comment>
<evidence type="ECO:0000255" key="1">
    <source>
        <dbReference type="HAMAP-Rule" id="MF_01224"/>
    </source>
</evidence>
<proteinExistence type="inferred from homology"/>
<feature type="chain" id="PRO_0000097796" description="Cyclic pyranopterin monophosphate synthase">
    <location>
        <begin position="1"/>
        <end position="156"/>
    </location>
</feature>
<feature type="active site" evidence="1">
    <location>
        <position position="126"/>
    </location>
</feature>
<feature type="binding site" evidence="1">
    <location>
        <begin position="75"/>
        <end position="77"/>
    </location>
    <ligand>
        <name>substrate</name>
    </ligand>
</feature>
<feature type="binding site" evidence="1">
    <location>
        <begin position="111"/>
        <end position="112"/>
    </location>
    <ligand>
        <name>substrate</name>
    </ligand>
</feature>
<keyword id="KW-0456">Lyase</keyword>
<keyword id="KW-0501">Molybdenum cofactor biosynthesis</keyword>
<keyword id="KW-1185">Reference proteome</keyword>
<protein>
    <recommendedName>
        <fullName evidence="1">Cyclic pyranopterin monophosphate synthase</fullName>
        <ecNumber evidence="1">4.6.1.17</ecNumber>
    </recommendedName>
    <alternativeName>
        <fullName evidence="1">Molybdenum cofactor biosynthesis protein C</fullName>
    </alternativeName>
</protein>
<name>MOAC_CORGL</name>
<accession>Q8NTU1</accession>
<reference key="1">
    <citation type="journal article" date="2003" name="Appl. Microbiol. Biotechnol.">
        <title>The Corynebacterium glutamicum genome: features and impacts on biotechnological processes.</title>
        <authorList>
            <person name="Ikeda M."/>
            <person name="Nakagawa S."/>
        </authorList>
    </citation>
    <scope>NUCLEOTIDE SEQUENCE [LARGE SCALE GENOMIC DNA]</scope>
    <source>
        <strain>ATCC 13032 / DSM 20300 / JCM 1318 / BCRC 11384 / CCUG 27702 / LMG 3730 / NBRC 12168 / NCIMB 10025 / NRRL B-2784 / 534</strain>
    </source>
</reference>
<reference key="2">
    <citation type="journal article" date="2003" name="J. Biotechnol.">
        <title>The complete Corynebacterium glutamicum ATCC 13032 genome sequence and its impact on the production of L-aspartate-derived amino acids and vitamins.</title>
        <authorList>
            <person name="Kalinowski J."/>
            <person name="Bathe B."/>
            <person name="Bartels D."/>
            <person name="Bischoff N."/>
            <person name="Bott M."/>
            <person name="Burkovski A."/>
            <person name="Dusch N."/>
            <person name="Eggeling L."/>
            <person name="Eikmanns B.J."/>
            <person name="Gaigalat L."/>
            <person name="Goesmann A."/>
            <person name="Hartmann M."/>
            <person name="Huthmacher K."/>
            <person name="Kraemer R."/>
            <person name="Linke B."/>
            <person name="McHardy A.C."/>
            <person name="Meyer F."/>
            <person name="Moeckel B."/>
            <person name="Pfefferle W."/>
            <person name="Puehler A."/>
            <person name="Rey D.A."/>
            <person name="Rueckert C."/>
            <person name="Rupp O."/>
            <person name="Sahm H."/>
            <person name="Wendisch V.F."/>
            <person name="Wiegraebe I."/>
            <person name="Tauch A."/>
        </authorList>
    </citation>
    <scope>NUCLEOTIDE SEQUENCE [LARGE SCALE GENOMIC DNA]</scope>
    <source>
        <strain>ATCC 13032 / DSM 20300 / JCM 1318 / BCRC 11384 / CCUG 27702 / LMG 3730 / NBRC 12168 / NCIMB 10025 / NRRL B-2784 / 534</strain>
    </source>
</reference>
<gene>
    <name evidence="1" type="primary">moaC</name>
    <name type="ordered locus">Cgl0211</name>
    <name type="ordered locus">cg0260</name>
</gene>
<dbReference type="EC" id="4.6.1.17" evidence="1"/>
<dbReference type="EMBL" id="BA000036">
    <property type="protein sequence ID" value="BAB97604.1"/>
    <property type="molecule type" value="Genomic_DNA"/>
</dbReference>
<dbReference type="EMBL" id="BX927148">
    <property type="protein sequence ID" value="CAF18782.1"/>
    <property type="molecule type" value="Genomic_DNA"/>
</dbReference>
<dbReference type="RefSeq" id="NP_599464.1">
    <property type="nucleotide sequence ID" value="NC_003450.3"/>
</dbReference>
<dbReference type="RefSeq" id="WP_011013475.1">
    <property type="nucleotide sequence ID" value="NC_006958.1"/>
</dbReference>
<dbReference type="SMR" id="Q8NTU1"/>
<dbReference type="STRING" id="196627.cg0260"/>
<dbReference type="GeneID" id="1021271"/>
<dbReference type="KEGG" id="cgb:cg0260"/>
<dbReference type="KEGG" id="cgl:Cgl0211"/>
<dbReference type="PATRIC" id="fig|196627.13.peg.215"/>
<dbReference type="eggNOG" id="COG0315">
    <property type="taxonomic scope" value="Bacteria"/>
</dbReference>
<dbReference type="HOGENOM" id="CLU_074693_1_1_11"/>
<dbReference type="OrthoDB" id="9794429at2"/>
<dbReference type="BioCyc" id="CORYNE:G18NG-9761-MONOMER"/>
<dbReference type="UniPathway" id="UPA00344"/>
<dbReference type="Proteomes" id="UP000000582">
    <property type="component" value="Chromosome"/>
</dbReference>
<dbReference type="Proteomes" id="UP000001009">
    <property type="component" value="Chromosome"/>
</dbReference>
<dbReference type="GO" id="GO:0061799">
    <property type="term" value="F:cyclic pyranopterin monophosphate synthase activity"/>
    <property type="evidence" value="ECO:0007669"/>
    <property type="project" value="UniProtKB-UniRule"/>
</dbReference>
<dbReference type="GO" id="GO:0006777">
    <property type="term" value="P:Mo-molybdopterin cofactor biosynthetic process"/>
    <property type="evidence" value="ECO:0007669"/>
    <property type="project" value="UniProtKB-UniRule"/>
</dbReference>
<dbReference type="CDD" id="cd01420">
    <property type="entry name" value="MoaC_PE"/>
    <property type="match status" value="1"/>
</dbReference>
<dbReference type="Gene3D" id="3.30.70.640">
    <property type="entry name" value="Molybdopterin cofactor biosynthesis C (MoaC) domain"/>
    <property type="match status" value="1"/>
</dbReference>
<dbReference type="HAMAP" id="MF_01224_B">
    <property type="entry name" value="MoaC_B"/>
    <property type="match status" value="1"/>
</dbReference>
<dbReference type="InterPro" id="IPR023045">
    <property type="entry name" value="MoaC"/>
</dbReference>
<dbReference type="InterPro" id="IPR047594">
    <property type="entry name" value="MoaC_bact/euk"/>
</dbReference>
<dbReference type="InterPro" id="IPR036522">
    <property type="entry name" value="MoaC_sf"/>
</dbReference>
<dbReference type="InterPro" id="IPR050105">
    <property type="entry name" value="MoCo_biosynth_MoaA/MoaC"/>
</dbReference>
<dbReference type="InterPro" id="IPR002820">
    <property type="entry name" value="Mopterin_CF_biosynth-C_dom"/>
</dbReference>
<dbReference type="NCBIfam" id="TIGR00581">
    <property type="entry name" value="moaC"/>
    <property type="match status" value="1"/>
</dbReference>
<dbReference type="NCBIfam" id="NF006870">
    <property type="entry name" value="PRK09364.1"/>
    <property type="match status" value="1"/>
</dbReference>
<dbReference type="PANTHER" id="PTHR22960">
    <property type="entry name" value="MOLYBDOPTERIN COFACTOR SYNTHESIS PROTEIN A"/>
    <property type="match status" value="1"/>
</dbReference>
<dbReference type="Pfam" id="PF01967">
    <property type="entry name" value="MoaC"/>
    <property type="match status" value="1"/>
</dbReference>
<dbReference type="SUPFAM" id="SSF55040">
    <property type="entry name" value="Molybdenum cofactor biosynthesis protein C, MoaC"/>
    <property type="match status" value="1"/>
</dbReference>